<dbReference type="EC" id="1.1.1.-" evidence="1"/>
<dbReference type="EMBL" id="CP000384">
    <property type="protein sequence ID" value="ABG08047.1"/>
    <property type="molecule type" value="Genomic_DNA"/>
</dbReference>
<dbReference type="SMR" id="Q1BAN7"/>
<dbReference type="KEGG" id="mmc:Mmcs_1938"/>
<dbReference type="HOGENOM" id="CLU_023205_0_1_11"/>
<dbReference type="BioCyc" id="MSP164756:G1G6O-1983-MONOMER"/>
<dbReference type="GO" id="GO:0004033">
    <property type="term" value="F:aldo-keto reductase (NADPH) activity"/>
    <property type="evidence" value="ECO:0007669"/>
    <property type="project" value="TreeGrafter"/>
</dbReference>
<dbReference type="CDD" id="cd19134">
    <property type="entry name" value="AKR_AKR5H1"/>
    <property type="match status" value="1"/>
</dbReference>
<dbReference type="FunFam" id="3.20.20.100:FF:000015">
    <property type="entry name" value="Oxidoreductase, aldo/keto reductase family"/>
    <property type="match status" value="1"/>
</dbReference>
<dbReference type="Gene3D" id="3.20.20.100">
    <property type="entry name" value="NADP-dependent oxidoreductase domain"/>
    <property type="match status" value="1"/>
</dbReference>
<dbReference type="InterPro" id="IPR020471">
    <property type="entry name" value="AKR"/>
</dbReference>
<dbReference type="InterPro" id="IPR018170">
    <property type="entry name" value="Aldo/ket_reductase_CS"/>
</dbReference>
<dbReference type="InterPro" id="IPR023210">
    <property type="entry name" value="NADP_OxRdtase_dom"/>
</dbReference>
<dbReference type="InterPro" id="IPR036812">
    <property type="entry name" value="NADP_OxRdtase_dom_sf"/>
</dbReference>
<dbReference type="PANTHER" id="PTHR43827">
    <property type="entry name" value="2,5-DIKETO-D-GLUCONIC ACID REDUCTASE"/>
    <property type="match status" value="1"/>
</dbReference>
<dbReference type="PANTHER" id="PTHR43827:SF3">
    <property type="entry name" value="NADP-DEPENDENT OXIDOREDUCTASE DOMAIN-CONTAINING PROTEIN"/>
    <property type="match status" value="1"/>
</dbReference>
<dbReference type="Pfam" id="PF00248">
    <property type="entry name" value="Aldo_ket_red"/>
    <property type="match status" value="1"/>
</dbReference>
<dbReference type="PIRSF" id="PIRSF000097">
    <property type="entry name" value="AKR"/>
    <property type="match status" value="1"/>
</dbReference>
<dbReference type="PRINTS" id="PR00069">
    <property type="entry name" value="ALDKETRDTASE"/>
</dbReference>
<dbReference type="SUPFAM" id="SSF51430">
    <property type="entry name" value="NAD(P)-linked oxidoreductase"/>
    <property type="match status" value="1"/>
</dbReference>
<dbReference type="PROSITE" id="PS00798">
    <property type="entry name" value="ALDOKETO_REDUCTASE_1"/>
    <property type="match status" value="1"/>
</dbReference>
<dbReference type="PROSITE" id="PS00062">
    <property type="entry name" value="ALDOKETO_REDUCTASE_2"/>
    <property type="match status" value="1"/>
</dbReference>
<dbReference type="PROSITE" id="PS00063">
    <property type="entry name" value="ALDOKETO_REDUCTASE_3"/>
    <property type="match status" value="1"/>
</dbReference>
<comment type="similarity">
    <text evidence="3">Belongs to the aldo/keto reductase family.</text>
</comment>
<protein>
    <recommendedName>
        <fullName evidence="1">Aldo-keto reductase Mmcs_1938</fullName>
        <ecNumber evidence="1">1.1.1.-</ecNumber>
    </recommendedName>
</protein>
<feature type="chain" id="PRO_0000380746" description="Aldo-keto reductase Mmcs_1938">
    <location>
        <begin position="1"/>
        <end position="283"/>
    </location>
</feature>
<feature type="active site" description="Proton donor" evidence="2">
    <location>
        <position position="58"/>
    </location>
</feature>
<feature type="binding site" evidence="1">
    <location>
        <position position="196"/>
    </location>
    <ligand>
        <name>NADPH</name>
        <dbReference type="ChEBI" id="CHEBI:57783"/>
    </ligand>
</feature>
<feature type="binding site" evidence="1">
    <location>
        <position position="198"/>
    </location>
    <ligand>
        <name>NADPH</name>
        <dbReference type="ChEBI" id="CHEBI:57783"/>
    </ligand>
</feature>
<feature type="binding site" evidence="1">
    <location>
        <position position="200"/>
    </location>
    <ligand>
        <name>NADPH</name>
        <dbReference type="ChEBI" id="CHEBI:57783"/>
    </ligand>
</feature>
<feature type="binding site" evidence="1">
    <location>
        <position position="236"/>
    </location>
    <ligand>
        <name>NADPH</name>
        <dbReference type="ChEBI" id="CHEBI:57783"/>
    </ligand>
</feature>
<feature type="binding site" evidence="1">
    <location>
        <position position="238"/>
    </location>
    <ligand>
        <name>NADPH</name>
        <dbReference type="ChEBI" id="CHEBI:57783"/>
    </ligand>
</feature>
<feature type="binding site" evidence="1">
    <location>
        <position position="239"/>
    </location>
    <ligand>
        <name>NADPH</name>
        <dbReference type="ChEBI" id="CHEBI:57783"/>
    </ligand>
</feature>
<feature type="binding site" evidence="1">
    <location>
        <position position="240"/>
    </location>
    <ligand>
        <name>NADPH</name>
        <dbReference type="ChEBI" id="CHEBI:57783"/>
    </ligand>
</feature>
<feature type="binding site" evidence="1">
    <location>
        <position position="244"/>
    </location>
    <ligand>
        <name>NADPH</name>
        <dbReference type="ChEBI" id="CHEBI:57783"/>
    </ligand>
</feature>
<feature type="binding site" evidence="1">
    <location>
        <position position="247"/>
    </location>
    <ligand>
        <name>NADPH</name>
        <dbReference type="ChEBI" id="CHEBI:57783"/>
    </ligand>
</feature>
<feature type="binding site" evidence="1">
    <location>
        <position position="248"/>
    </location>
    <ligand>
        <name>NADPH</name>
        <dbReference type="ChEBI" id="CHEBI:57783"/>
    </ligand>
</feature>
<feature type="binding site" evidence="1">
    <location>
        <position position="274"/>
    </location>
    <ligand>
        <name>NADPH</name>
        <dbReference type="ChEBI" id="CHEBI:57783"/>
    </ligand>
</feature>
<reference key="1">
    <citation type="submission" date="2006-06" db="EMBL/GenBank/DDBJ databases">
        <title>Complete sequence of chromosome of Mycobacterium sp. MCS.</title>
        <authorList>
            <consortium name="US DOE Joint Genome Institute"/>
            <person name="Copeland A."/>
            <person name="Lucas S."/>
            <person name="Lapidus A."/>
            <person name="Barry K."/>
            <person name="Detter J.C."/>
            <person name="Glavina del Rio T."/>
            <person name="Hammon N."/>
            <person name="Israni S."/>
            <person name="Dalin E."/>
            <person name="Tice H."/>
            <person name="Pitluck S."/>
            <person name="Martinez M."/>
            <person name="Schmutz J."/>
            <person name="Larimer F."/>
            <person name="Land M."/>
            <person name="Hauser L."/>
            <person name="Kyrpides N."/>
            <person name="Kim E."/>
            <person name="Miller C.D."/>
            <person name="Hughes J.E."/>
            <person name="Anderson A.J."/>
            <person name="Sims R.C."/>
            <person name="Richardson P."/>
        </authorList>
    </citation>
    <scope>NUCLEOTIDE SEQUENCE [LARGE SCALE GENOMIC DNA]</scope>
    <source>
        <strain>MCS</strain>
    </source>
</reference>
<organism>
    <name type="scientific">Mycobacterium sp. (strain MCS)</name>
    <dbReference type="NCBI Taxonomy" id="164756"/>
    <lineage>
        <taxon>Bacteria</taxon>
        <taxon>Bacillati</taxon>
        <taxon>Actinomycetota</taxon>
        <taxon>Actinomycetes</taxon>
        <taxon>Mycobacteriales</taxon>
        <taxon>Mycobacteriaceae</taxon>
        <taxon>Mycobacterium</taxon>
    </lineage>
</organism>
<sequence length="283" mass="30113">MTSTRGEAAGIPSVSLNDGHSIPVLGLGVGELSEAEAERSVAAALEAGYRLIDTAAVYGNEAAVGRAVNASGIPREEIYVTTKLAVADQGFGTSQDAARASLERLGLDYVDLYLIHWPAGDHGKYIDSWGGLMKAKQDGVARSIGVCNFNAEHLSNIIDLSFFTPAINQIELHPLLNQAELREVNAGYGIVTEAYGPLGVGRLLDHAAVTGVAQAHGKTPAQVLLRWSIQLGNVVIARSANPDRITSNLEVFDFELTDDEMATLNGLDEGTRFRPDPETYTGP</sequence>
<accession>Q1BAN7</accession>
<evidence type="ECO:0000250" key="1">
    <source>
        <dbReference type="UniProtKB" id="A0QV09"/>
    </source>
</evidence>
<evidence type="ECO:0000250" key="2">
    <source>
        <dbReference type="UniProtKB" id="P80874"/>
    </source>
</evidence>
<evidence type="ECO:0000305" key="3"/>
<keyword id="KW-0521">NADP</keyword>
<keyword id="KW-0560">Oxidoreductase</keyword>
<proteinExistence type="inferred from homology"/>
<name>Y1938_MYCSS</name>
<gene>
    <name type="ordered locus">Mmcs_1938</name>
</gene>